<organism>
    <name type="scientific">Kocuria rhizophila (strain ATCC 9341 / DSM 348 / NBRC 103217 / DC2201)</name>
    <dbReference type="NCBI Taxonomy" id="378753"/>
    <lineage>
        <taxon>Bacteria</taxon>
        <taxon>Bacillati</taxon>
        <taxon>Actinomycetota</taxon>
        <taxon>Actinomycetes</taxon>
        <taxon>Micrococcales</taxon>
        <taxon>Micrococcaceae</taxon>
        <taxon>Kocuria</taxon>
    </lineage>
</organism>
<sequence>MEGPEIQSAEAVIDNGSYGKRVVRFETGRLARQAAGSAMVYIDEETSMLSATAVGKHPREGFDFFPLTVDVEERMYAAGRIPGSFFRREGRPSTDAILTCRLIDRPLRPAFGKGLRNEVQVVVTVMSIAPDEIYNTVAINAASMSTTLSGMPFQGPVGGVRMALMAEENGGHQWIAFPKHSQLENAVFDMAVAGRVVTTKDGGQDVAIMMVEAEATDNAWELIKGQGAVAPSEELVAEGLEASKPFIKALCDAQADLAARNRKPELDLPRFGGFGDDAAQAVEQFVGERMAQVYSIAGKQEREAATDELHHDTLAELTGEGKPFEGRADEVNGAYQALTKQTVRQRILKDKVRIDGRGLTDIRQLSAEVDVLPRVHGSALFERGETQIMGVTTLNMLKMEQQIDSLSPVKHKRYIHHYNFPPYSTGETGRVGSPKRREIGHGALAERAITPVLPSREEFPYAIRQVSEALGSNGSTSMGSVCASTLALYNAGVPLRAPVAGIAMGLVSDTVDGEVQYAALTDILGAEDALGDMDFKVAGTREFVTAIQLDTKLDGIPASVLASALTQAREARLYILDVLTSAIDAPDEMSEFAPRVISVTVPVSKIGEVIGPKGKMINQIQEDTGTDISIEDDGTVYIGATDGPSAEAARSAINAIANPQVPEVGERYLGTVVKTTTFGAFVSLTPGKDGLLHISEMRQLNDDKRVNEVDDVLSVGQKVQVEITKVDDRGKLSLAPVVAGSDSDAASDDEN</sequence>
<evidence type="ECO:0000255" key="1">
    <source>
        <dbReference type="HAMAP-Rule" id="MF_01595"/>
    </source>
</evidence>
<proteinExistence type="inferred from homology"/>
<gene>
    <name evidence="1" type="primary">pnp</name>
    <name type="ordered locus">KRH_15950</name>
</gene>
<comment type="function">
    <text evidence="1">Involved in mRNA degradation. Catalyzes the phosphorolysis of single-stranded polyribonucleotides processively in the 3'- to 5'-direction.</text>
</comment>
<comment type="catalytic activity">
    <reaction evidence="1">
        <text>RNA(n+1) + phosphate = RNA(n) + a ribonucleoside 5'-diphosphate</text>
        <dbReference type="Rhea" id="RHEA:22096"/>
        <dbReference type="Rhea" id="RHEA-COMP:14527"/>
        <dbReference type="Rhea" id="RHEA-COMP:17342"/>
        <dbReference type="ChEBI" id="CHEBI:43474"/>
        <dbReference type="ChEBI" id="CHEBI:57930"/>
        <dbReference type="ChEBI" id="CHEBI:140395"/>
        <dbReference type="EC" id="2.7.7.8"/>
    </reaction>
</comment>
<comment type="cofactor">
    <cofactor evidence="1">
        <name>Mg(2+)</name>
        <dbReference type="ChEBI" id="CHEBI:18420"/>
    </cofactor>
</comment>
<comment type="subcellular location">
    <subcellularLocation>
        <location evidence="1">Cytoplasm</location>
    </subcellularLocation>
</comment>
<comment type="similarity">
    <text evidence="1">Belongs to the polyribonucleotide nucleotidyltransferase family.</text>
</comment>
<accession>B2GKI3</accession>
<name>PNP_KOCRD</name>
<dbReference type="EC" id="2.7.7.8" evidence="1"/>
<dbReference type="EMBL" id="AP009152">
    <property type="protein sequence ID" value="BAG29942.1"/>
    <property type="molecule type" value="Genomic_DNA"/>
</dbReference>
<dbReference type="RefSeq" id="WP_012398663.1">
    <property type="nucleotide sequence ID" value="NC_010617.1"/>
</dbReference>
<dbReference type="SMR" id="B2GKI3"/>
<dbReference type="STRING" id="378753.KRH_15950"/>
<dbReference type="KEGG" id="krh:KRH_15950"/>
<dbReference type="eggNOG" id="COG1185">
    <property type="taxonomic scope" value="Bacteria"/>
</dbReference>
<dbReference type="HOGENOM" id="CLU_004217_2_2_11"/>
<dbReference type="OrthoDB" id="9804305at2"/>
<dbReference type="Proteomes" id="UP000008838">
    <property type="component" value="Chromosome"/>
</dbReference>
<dbReference type="GO" id="GO:0005829">
    <property type="term" value="C:cytosol"/>
    <property type="evidence" value="ECO:0007669"/>
    <property type="project" value="TreeGrafter"/>
</dbReference>
<dbReference type="GO" id="GO:0000175">
    <property type="term" value="F:3'-5'-RNA exonuclease activity"/>
    <property type="evidence" value="ECO:0007669"/>
    <property type="project" value="TreeGrafter"/>
</dbReference>
<dbReference type="GO" id="GO:0000287">
    <property type="term" value="F:magnesium ion binding"/>
    <property type="evidence" value="ECO:0007669"/>
    <property type="project" value="UniProtKB-UniRule"/>
</dbReference>
<dbReference type="GO" id="GO:0004654">
    <property type="term" value="F:polyribonucleotide nucleotidyltransferase activity"/>
    <property type="evidence" value="ECO:0007669"/>
    <property type="project" value="UniProtKB-UniRule"/>
</dbReference>
<dbReference type="GO" id="GO:0003723">
    <property type="term" value="F:RNA binding"/>
    <property type="evidence" value="ECO:0007669"/>
    <property type="project" value="UniProtKB-UniRule"/>
</dbReference>
<dbReference type="GO" id="GO:0006402">
    <property type="term" value="P:mRNA catabolic process"/>
    <property type="evidence" value="ECO:0007669"/>
    <property type="project" value="UniProtKB-UniRule"/>
</dbReference>
<dbReference type="GO" id="GO:0006396">
    <property type="term" value="P:RNA processing"/>
    <property type="evidence" value="ECO:0007669"/>
    <property type="project" value="InterPro"/>
</dbReference>
<dbReference type="CDD" id="cd02393">
    <property type="entry name" value="KH-I_PNPase"/>
    <property type="match status" value="1"/>
</dbReference>
<dbReference type="CDD" id="cd11364">
    <property type="entry name" value="RNase_PH_PNPase_2"/>
    <property type="match status" value="1"/>
</dbReference>
<dbReference type="CDD" id="cd04472">
    <property type="entry name" value="S1_PNPase"/>
    <property type="match status" value="1"/>
</dbReference>
<dbReference type="FunFam" id="2.40.50.140:FF:000069">
    <property type="entry name" value="Polyribonucleotide nucleotidyltransferase"/>
    <property type="match status" value="1"/>
</dbReference>
<dbReference type="FunFam" id="3.30.1370.10:FF:000001">
    <property type="entry name" value="Polyribonucleotide nucleotidyltransferase"/>
    <property type="match status" value="1"/>
</dbReference>
<dbReference type="FunFam" id="3.30.230.70:FF:000001">
    <property type="entry name" value="Polyribonucleotide nucleotidyltransferase"/>
    <property type="match status" value="1"/>
</dbReference>
<dbReference type="FunFam" id="3.30.230.70:FF:000002">
    <property type="entry name" value="Polyribonucleotide nucleotidyltransferase"/>
    <property type="match status" value="1"/>
</dbReference>
<dbReference type="Gene3D" id="3.30.230.70">
    <property type="entry name" value="GHMP Kinase, N-terminal domain"/>
    <property type="match status" value="2"/>
</dbReference>
<dbReference type="Gene3D" id="3.30.1370.10">
    <property type="entry name" value="K Homology domain, type 1"/>
    <property type="match status" value="1"/>
</dbReference>
<dbReference type="Gene3D" id="2.40.50.140">
    <property type="entry name" value="Nucleic acid-binding proteins"/>
    <property type="match status" value="1"/>
</dbReference>
<dbReference type="HAMAP" id="MF_01595">
    <property type="entry name" value="PNPase"/>
    <property type="match status" value="1"/>
</dbReference>
<dbReference type="InterPro" id="IPR001247">
    <property type="entry name" value="ExoRNase_PH_dom1"/>
</dbReference>
<dbReference type="InterPro" id="IPR036345">
    <property type="entry name" value="ExoRNase_PH_dom2_sf"/>
</dbReference>
<dbReference type="InterPro" id="IPR014069">
    <property type="entry name" value="GPSI/PNP"/>
</dbReference>
<dbReference type="InterPro" id="IPR004087">
    <property type="entry name" value="KH_dom"/>
</dbReference>
<dbReference type="InterPro" id="IPR004088">
    <property type="entry name" value="KH_dom_type_1"/>
</dbReference>
<dbReference type="InterPro" id="IPR036612">
    <property type="entry name" value="KH_dom_type_1_sf"/>
</dbReference>
<dbReference type="InterPro" id="IPR012340">
    <property type="entry name" value="NA-bd_OB-fold"/>
</dbReference>
<dbReference type="InterPro" id="IPR012162">
    <property type="entry name" value="PNPase"/>
</dbReference>
<dbReference type="InterPro" id="IPR027408">
    <property type="entry name" value="PNPase/RNase_PH_dom_sf"/>
</dbReference>
<dbReference type="InterPro" id="IPR015848">
    <property type="entry name" value="PNPase_PH_RNA-bd_bac/org-type"/>
</dbReference>
<dbReference type="InterPro" id="IPR036456">
    <property type="entry name" value="PNPase_PH_RNA-bd_sf"/>
</dbReference>
<dbReference type="InterPro" id="IPR020568">
    <property type="entry name" value="Ribosomal_Su5_D2-typ_SF"/>
</dbReference>
<dbReference type="InterPro" id="IPR003029">
    <property type="entry name" value="S1_domain"/>
</dbReference>
<dbReference type="NCBIfam" id="TIGR03591">
    <property type="entry name" value="polynuc_phos"/>
    <property type="match status" value="1"/>
</dbReference>
<dbReference type="NCBIfam" id="TIGR02696">
    <property type="entry name" value="pppGpp_PNP"/>
    <property type="match status" value="1"/>
</dbReference>
<dbReference type="NCBIfam" id="NF008805">
    <property type="entry name" value="PRK11824.1"/>
    <property type="match status" value="1"/>
</dbReference>
<dbReference type="PANTHER" id="PTHR11252">
    <property type="entry name" value="POLYRIBONUCLEOTIDE NUCLEOTIDYLTRANSFERASE"/>
    <property type="match status" value="1"/>
</dbReference>
<dbReference type="PANTHER" id="PTHR11252:SF0">
    <property type="entry name" value="POLYRIBONUCLEOTIDE NUCLEOTIDYLTRANSFERASE 1, MITOCHONDRIAL"/>
    <property type="match status" value="1"/>
</dbReference>
<dbReference type="Pfam" id="PF00013">
    <property type="entry name" value="KH_1"/>
    <property type="match status" value="1"/>
</dbReference>
<dbReference type="Pfam" id="PF03726">
    <property type="entry name" value="PNPase"/>
    <property type="match status" value="1"/>
</dbReference>
<dbReference type="Pfam" id="PF01138">
    <property type="entry name" value="RNase_PH"/>
    <property type="match status" value="2"/>
</dbReference>
<dbReference type="Pfam" id="PF00575">
    <property type="entry name" value="S1"/>
    <property type="match status" value="1"/>
</dbReference>
<dbReference type="PIRSF" id="PIRSF005499">
    <property type="entry name" value="PNPase"/>
    <property type="match status" value="1"/>
</dbReference>
<dbReference type="SMART" id="SM00322">
    <property type="entry name" value="KH"/>
    <property type="match status" value="1"/>
</dbReference>
<dbReference type="SMART" id="SM00316">
    <property type="entry name" value="S1"/>
    <property type="match status" value="1"/>
</dbReference>
<dbReference type="SUPFAM" id="SSF54791">
    <property type="entry name" value="Eukaryotic type KH-domain (KH-domain type I)"/>
    <property type="match status" value="1"/>
</dbReference>
<dbReference type="SUPFAM" id="SSF46915">
    <property type="entry name" value="Polynucleotide phosphorylase/guanosine pentaphosphate synthase (PNPase/GPSI), domain 3"/>
    <property type="match status" value="1"/>
</dbReference>
<dbReference type="SUPFAM" id="SSF55666">
    <property type="entry name" value="Ribonuclease PH domain 2-like"/>
    <property type="match status" value="2"/>
</dbReference>
<dbReference type="SUPFAM" id="SSF54211">
    <property type="entry name" value="Ribosomal protein S5 domain 2-like"/>
    <property type="match status" value="2"/>
</dbReference>
<dbReference type="PROSITE" id="PS50084">
    <property type="entry name" value="KH_TYPE_1"/>
    <property type="match status" value="1"/>
</dbReference>
<dbReference type="PROSITE" id="PS50126">
    <property type="entry name" value="S1"/>
    <property type="match status" value="1"/>
</dbReference>
<protein>
    <recommendedName>
        <fullName evidence="1">Polyribonucleotide nucleotidyltransferase</fullName>
        <ecNumber evidence="1">2.7.7.8</ecNumber>
    </recommendedName>
    <alternativeName>
        <fullName evidence="1">Polynucleotide phosphorylase</fullName>
        <shortName evidence="1">PNPase</shortName>
    </alternativeName>
</protein>
<keyword id="KW-0963">Cytoplasm</keyword>
<keyword id="KW-0460">Magnesium</keyword>
<keyword id="KW-0479">Metal-binding</keyword>
<keyword id="KW-0548">Nucleotidyltransferase</keyword>
<keyword id="KW-1185">Reference proteome</keyword>
<keyword id="KW-0694">RNA-binding</keyword>
<keyword id="KW-0808">Transferase</keyword>
<feature type="chain" id="PRO_1000147925" description="Polyribonucleotide nucleotidyltransferase">
    <location>
        <begin position="1"/>
        <end position="751"/>
    </location>
</feature>
<feature type="domain" description="KH" evidence="1">
    <location>
        <begin position="594"/>
        <end position="653"/>
    </location>
</feature>
<feature type="domain" description="S1 motif" evidence="1">
    <location>
        <begin position="665"/>
        <end position="737"/>
    </location>
</feature>
<feature type="binding site" evidence="1">
    <location>
        <position position="528"/>
    </location>
    <ligand>
        <name>Mg(2+)</name>
        <dbReference type="ChEBI" id="CHEBI:18420"/>
    </ligand>
</feature>
<feature type="binding site" evidence="1">
    <location>
        <position position="534"/>
    </location>
    <ligand>
        <name>Mg(2+)</name>
        <dbReference type="ChEBI" id="CHEBI:18420"/>
    </ligand>
</feature>
<reference key="1">
    <citation type="journal article" date="2008" name="J. Bacteriol.">
        <title>Complete genome sequence of the soil actinomycete Kocuria rhizophila.</title>
        <authorList>
            <person name="Takarada H."/>
            <person name="Sekine M."/>
            <person name="Kosugi H."/>
            <person name="Matsuo Y."/>
            <person name="Fujisawa T."/>
            <person name="Omata S."/>
            <person name="Kishi E."/>
            <person name="Shimizu A."/>
            <person name="Tsukatani N."/>
            <person name="Tanikawa S."/>
            <person name="Fujita N."/>
            <person name="Harayama S."/>
        </authorList>
    </citation>
    <scope>NUCLEOTIDE SEQUENCE [LARGE SCALE GENOMIC DNA]</scope>
    <source>
        <strain>ATCC 9341 / DSM 348 / NBRC 103217 / DC2201</strain>
    </source>
</reference>